<comment type="function">
    <text evidence="4">May act as a neurotoxin.</text>
</comment>
<comment type="subcellular location">
    <subcellularLocation>
        <location evidence="2">Secreted</location>
    </subcellularLocation>
</comment>
<comment type="tissue specificity">
    <text evidence="5">Expressed by the venom duct.</text>
</comment>
<comment type="domain">
    <text evidence="4">The cysteine framework is III (CC-C-C-CC). Classified in the M-2 branch, since 4 residues stand between the fourth and the fifth cysteine residues.</text>
</comment>
<comment type="PTM">
    <text evidence="2">Contains 3 disulfide bonds.</text>
</comment>
<comment type="mass spectrometry"/>
<comment type="similarity">
    <text evidence="4">Belongs to the conotoxin M superfamily.</text>
</comment>
<feature type="peptide" id="PRO_0000439622" description="Conotoxin Fi3c" evidence="2">
    <location>
        <begin position="1"/>
        <end position="14"/>
    </location>
</feature>
<feature type="disulfide bond" evidence="1">
    <location>
        <begin position="1"/>
        <end position="13"/>
    </location>
</feature>
<feature type="disulfide bond" evidence="1">
    <location>
        <begin position="2"/>
        <end position="9"/>
    </location>
</feature>
<feature type="disulfide bond" evidence="1">
    <location>
        <begin position="6"/>
        <end position="12"/>
    </location>
</feature>
<feature type="unsure residue" description="I or L" evidence="5">
    <location>
        <position position="10"/>
    </location>
</feature>
<accession>P0DP11</accession>
<sequence>CCSTNCAVCIPCCP</sequence>
<protein>
    <recommendedName>
        <fullName evidence="3">Conotoxin Fi3c</fullName>
    </recommendedName>
</protein>
<dbReference type="GO" id="GO:0005576">
    <property type="term" value="C:extracellular region"/>
    <property type="evidence" value="ECO:0007669"/>
    <property type="project" value="UniProtKB-SubCell"/>
</dbReference>
<dbReference type="GO" id="GO:0090729">
    <property type="term" value="F:toxin activity"/>
    <property type="evidence" value="ECO:0007669"/>
    <property type="project" value="UniProtKB-KW"/>
</dbReference>
<name>M3C_CONFI</name>
<proteinExistence type="evidence at protein level"/>
<evidence type="ECO:0000250" key="1">
    <source>
        <dbReference type="UniProtKB" id="P0CI24"/>
    </source>
</evidence>
<evidence type="ECO:0000269" key="2">
    <source>
    </source>
</evidence>
<evidence type="ECO:0000303" key="3">
    <source>
    </source>
</evidence>
<evidence type="ECO:0000305" key="4"/>
<evidence type="ECO:0000305" key="5">
    <source>
    </source>
</evidence>
<keyword id="KW-0903">Direct protein sequencing</keyword>
<keyword id="KW-1015">Disulfide bond</keyword>
<keyword id="KW-0528">Neurotoxin</keyword>
<keyword id="KW-0964">Secreted</keyword>
<keyword id="KW-0800">Toxin</keyword>
<organism>
    <name type="scientific">Conus figulinus</name>
    <name type="common">Fig cone</name>
    <dbReference type="NCBI Taxonomy" id="101301"/>
    <lineage>
        <taxon>Eukaryota</taxon>
        <taxon>Metazoa</taxon>
        <taxon>Spiralia</taxon>
        <taxon>Lophotrochozoa</taxon>
        <taxon>Mollusca</taxon>
        <taxon>Gastropoda</taxon>
        <taxon>Caenogastropoda</taxon>
        <taxon>Neogastropoda</taxon>
        <taxon>Conoidea</taxon>
        <taxon>Conidae</taxon>
        <taxon>Conus</taxon>
        <taxon>Dendroconus</taxon>
    </lineage>
</organism>
<reference key="1">
    <citation type="journal article" date="2015" name="J. Pept. Sci.">
        <title>Novel M-Superfamily and T-Superfamily conotoxins and contryphans from the vermivorous snail Conus figulinus.</title>
        <authorList>
            <person name="Rajesh R.P."/>
        </authorList>
    </citation>
    <scope>PROTEIN SEQUENCE</scope>
    <scope>IDENTIFICATION BY MASS SPECTROMETRY</scope>
    <scope>MASS SPECTROMETRY</scope>
    <scope>SUBCELLULAR LOCATION</scope>
    <source>
        <tissue>Venom</tissue>
    </source>
</reference>